<gene>
    <name evidence="1" type="primary">psbZ</name>
    <name type="synonym">ycf9</name>
</gene>
<feature type="chain" id="PRO_0000217715" description="Photosystem II reaction center protein Z">
    <location>
        <begin position="1"/>
        <end position="62"/>
    </location>
</feature>
<feature type="transmembrane region" description="Helical" evidence="1">
    <location>
        <begin position="8"/>
        <end position="28"/>
    </location>
</feature>
<feature type="transmembrane region" description="Helical" evidence="1">
    <location>
        <begin position="41"/>
        <end position="61"/>
    </location>
</feature>
<evidence type="ECO:0000255" key="1">
    <source>
        <dbReference type="HAMAP-Rule" id="MF_00644"/>
    </source>
</evidence>
<organism>
    <name type="scientific">Nephroselmis olivacea</name>
    <name type="common">Green alga</name>
    <dbReference type="NCBI Taxonomy" id="31312"/>
    <lineage>
        <taxon>Eukaryota</taxon>
        <taxon>Viridiplantae</taxon>
        <taxon>Chlorophyta</taxon>
        <taxon>Nephroselmidophyceae</taxon>
        <taxon>Nephroselmidales</taxon>
        <taxon>Nephroselmidaceae</taxon>
        <taxon>Nephroselmis</taxon>
    </lineage>
</organism>
<keyword id="KW-0150">Chloroplast</keyword>
<keyword id="KW-0472">Membrane</keyword>
<keyword id="KW-0602">Photosynthesis</keyword>
<keyword id="KW-0604">Photosystem II</keyword>
<keyword id="KW-0934">Plastid</keyword>
<keyword id="KW-0674">Reaction center</keyword>
<keyword id="KW-0793">Thylakoid</keyword>
<keyword id="KW-0812">Transmembrane</keyword>
<keyword id="KW-1133">Transmembrane helix</keyword>
<reference key="1">
    <citation type="journal article" date="1999" name="Proc. Natl. Acad. Sci. U.S.A.">
        <title>The complete chloroplast DNA sequence of the green alga Nephroselmis olivacea: insights into the architecture of ancestral chloroplast genomes.</title>
        <authorList>
            <person name="Turmel M."/>
            <person name="Otis C."/>
            <person name="Lemieux C."/>
        </authorList>
    </citation>
    <scope>NUCLEOTIDE SEQUENCE [LARGE SCALE GENOMIC DNA]</scope>
    <source>
        <strain>NIES-484 / S-N-5-8</strain>
    </source>
</reference>
<dbReference type="EMBL" id="AF137379">
    <property type="protein sequence ID" value="AAD54844.1"/>
    <property type="molecule type" value="Genomic_DNA"/>
</dbReference>
<dbReference type="RefSeq" id="NP_050873.1">
    <property type="nucleotide sequence ID" value="NC_000927.1"/>
</dbReference>
<dbReference type="SMR" id="Q9TKX2"/>
<dbReference type="GeneID" id="801959"/>
<dbReference type="GO" id="GO:0009535">
    <property type="term" value="C:chloroplast thylakoid membrane"/>
    <property type="evidence" value="ECO:0007669"/>
    <property type="project" value="UniProtKB-SubCell"/>
</dbReference>
<dbReference type="GO" id="GO:0009539">
    <property type="term" value="C:photosystem II reaction center"/>
    <property type="evidence" value="ECO:0007669"/>
    <property type="project" value="InterPro"/>
</dbReference>
<dbReference type="GO" id="GO:0015979">
    <property type="term" value="P:photosynthesis"/>
    <property type="evidence" value="ECO:0007669"/>
    <property type="project" value="UniProtKB-UniRule"/>
</dbReference>
<dbReference type="GO" id="GO:0042549">
    <property type="term" value="P:photosystem II stabilization"/>
    <property type="evidence" value="ECO:0007669"/>
    <property type="project" value="InterPro"/>
</dbReference>
<dbReference type="Gene3D" id="1.10.287.740">
    <property type="entry name" value="Photosystem II PsbZ, reaction centre"/>
    <property type="match status" value="1"/>
</dbReference>
<dbReference type="HAMAP" id="MF_00644">
    <property type="entry name" value="PSII_PsbZ"/>
    <property type="match status" value="1"/>
</dbReference>
<dbReference type="InterPro" id="IPR002644">
    <property type="entry name" value="PSII_PsbZ"/>
</dbReference>
<dbReference type="InterPro" id="IPR036512">
    <property type="entry name" value="PSII_PsbZ_sf"/>
</dbReference>
<dbReference type="NCBIfam" id="TIGR03043">
    <property type="entry name" value="PS_II_psbZ"/>
    <property type="match status" value="1"/>
</dbReference>
<dbReference type="PANTHER" id="PTHR34971">
    <property type="entry name" value="PHOTOSYSTEM II REACTION CENTER PROTEIN Z"/>
    <property type="match status" value="1"/>
</dbReference>
<dbReference type="PANTHER" id="PTHR34971:SF2">
    <property type="entry name" value="PHOTOSYSTEM II REACTION CENTER PROTEIN Z"/>
    <property type="match status" value="1"/>
</dbReference>
<dbReference type="Pfam" id="PF01737">
    <property type="entry name" value="Ycf9"/>
    <property type="match status" value="1"/>
</dbReference>
<dbReference type="SUPFAM" id="SSF161055">
    <property type="entry name" value="PsbZ-like"/>
    <property type="match status" value="1"/>
</dbReference>
<name>PSBZ_NEPOL</name>
<sequence length="62" mass="6609">MTFIFQLALFALVALSFLLVVGVPVAFAAPEGWNVTKGYVFQGVSAWFALVFTVGVLNSLVA</sequence>
<accession>Q9TKX2</accession>
<proteinExistence type="inferred from homology"/>
<protein>
    <recommendedName>
        <fullName evidence="1">Photosystem II reaction center protein Z</fullName>
        <shortName evidence="1">PSII-Z</shortName>
    </recommendedName>
</protein>
<geneLocation type="chloroplast"/>
<comment type="function">
    <text evidence="1">May control the interaction of photosystem II (PSII) cores with the light-harvesting antenna, regulates electron flow through the 2 photosystem reaction centers. PSII is a light-driven water plastoquinone oxidoreductase, using light energy to abstract electrons from H(2)O, generating a proton gradient subsequently used for ATP formation.</text>
</comment>
<comment type="subunit">
    <text evidence="1">PSII is composed of 1 copy each of membrane proteins PsbA, PsbB, PsbC, PsbD, PsbE, PsbF, PsbH, PsbI, PsbJ, PsbK, PsbL, PsbM, PsbT, PsbY, PsbZ, Psb30/Ycf12, at least 3 peripheral proteins of the oxygen-evolving complex and a large number of cofactors. It forms dimeric complexes.</text>
</comment>
<comment type="subcellular location">
    <subcellularLocation>
        <location evidence="1">Plastid</location>
        <location evidence="1">Chloroplast thylakoid membrane</location>
        <topology evidence="1">Multi-pass membrane protein</topology>
    </subcellularLocation>
</comment>
<comment type="similarity">
    <text evidence="1">Belongs to the PsbZ family.</text>
</comment>